<keyword id="KW-0027">Amidation</keyword>
<keyword id="KW-0165">Cleavage on pair of basic residues</keyword>
<keyword id="KW-0903">Direct protein sequencing</keyword>
<keyword id="KW-1015">Disulfide bond</keyword>
<keyword id="KW-0372">Hormone</keyword>
<organism>
    <name type="scientific">Sclerophrys regularis</name>
    <name type="common">Common African toad</name>
    <name type="synonym">Bufo regularis</name>
    <dbReference type="NCBI Taxonomy" id="1978144"/>
    <lineage>
        <taxon>Eukaryota</taxon>
        <taxon>Metazoa</taxon>
        <taxon>Chordata</taxon>
        <taxon>Craniata</taxon>
        <taxon>Vertebrata</taxon>
        <taxon>Euteleostomi</taxon>
        <taxon>Amphibia</taxon>
        <taxon>Batrachia</taxon>
        <taxon>Anura</taxon>
        <taxon>Neobatrachia</taxon>
        <taxon>Hyloidea</taxon>
        <taxon>Bufonidae</taxon>
        <taxon>Sclerophrys</taxon>
    </lineage>
</organism>
<comment type="function">
    <text>Vasotocin is an antidiuretic hormone.</text>
</comment>
<comment type="similarity">
    <text evidence="2">Belongs to the vasopressin/oxytocin family.</text>
</comment>
<dbReference type="PIR" id="A49155">
    <property type="entry name" value="A49155"/>
</dbReference>
<dbReference type="GO" id="GO:0005576">
    <property type="term" value="C:extracellular region"/>
    <property type="evidence" value="ECO:0007669"/>
    <property type="project" value="InterPro"/>
</dbReference>
<dbReference type="GO" id="GO:0005185">
    <property type="term" value="F:neurohypophyseal hormone activity"/>
    <property type="evidence" value="ECO:0007669"/>
    <property type="project" value="InterPro"/>
</dbReference>
<dbReference type="InterPro" id="IPR000981">
    <property type="entry name" value="Neurhyp_horm"/>
</dbReference>
<dbReference type="InterPro" id="IPR022423">
    <property type="entry name" value="Neurohypophysial_hormone_CS"/>
</dbReference>
<dbReference type="Pfam" id="PF00220">
    <property type="entry name" value="Hormone_4"/>
    <property type="match status" value="1"/>
</dbReference>
<dbReference type="PRINTS" id="PR00831">
    <property type="entry name" value="NEUROPHYSIN"/>
</dbReference>
<dbReference type="PROSITE" id="PS00264">
    <property type="entry name" value="NEUROHYPOPHYS_HORM"/>
    <property type="match status" value="1"/>
</dbReference>
<feature type="peptide" id="PRO_0000020538" description="Hydrin-2">
    <location>
        <begin position="1"/>
        <end position="10"/>
    </location>
</feature>
<feature type="peptide" id="PRO_0000020539" description="Vasotocin">
    <location>
        <begin position="1"/>
        <end position="9"/>
    </location>
</feature>
<feature type="chain" id="PRO_0000020540" description="Neurophysin VT">
    <location>
        <begin position="13"/>
        <end position="27" status="greater than"/>
    </location>
</feature>
<feature type="modified residue" description="Glycine amide" evidence="1">
    <location>
        <position position="9"/>
    </location>
</feature>
<feature type="disulfide bond">
    <location>
        <begin position="1"/>
        <end position="6"/>
    </location>
</feature>
<feature type="unsure residue">
    <location>
        <begin position="11"/>
        <end position="12"/>
    </location>
</feature>
<feature type="non-terminal residue">
    <location>
        <position position="27"/>
    </location>
</feature>
<proteinExistence type="evidence at protein level"/>
<accession>P42992</accession>
<name>NEUV_SCLRE</name>
<protein>
    <recommendedName>
        <fullName>Vasotocin-neurophysin VT</fullName>
        <shortName>VT</shortName>
    </recommendedName>
    <component>
        <recommendedName>
            <fullName>Hydrin-2</fullName>
        </recommendedName>
        <alternativeName>
            <fullName>Hydrin II</fullName>
        </alternativeName>
    </component>
    <component>
        <recommendedName>
            <fullName>Vasotocin</fullName>
        </recommendedName>
    </component>
    <component>
        <recommendedName>
            <fullName>Neurophysin VT</fullName>
        </recommendedName>
    </component>
</protein>
<reference key="1">
    <citation type="journal article" date="1993" name="Comp. Biochem. Physiol.">
        <title>Vasotocin and hydrin 2 (vasotocinyl-Gly) in the African toad Bufo regularis: study under various environmental conditions.</title>
        <authorList>
            <person name="Chauvet J."/>
            <person name="Ouedraogo Y."/>
            <person name="Michel G."/>
            <person name="Acher R."/>
        </authorList>
    </citation>
    <scope>PROTEIN SEQUENCE</scope>
    <scope>AMIDATION AT GLY-9</scope>
</reference>
<evidence type="ECO:0000269" key="1">
    <source>
    </source>
</evidence>
<evidence type="ECO:0000305" key="2"/>
<sequence length="27" mass="2924">CYIQNCPRGGKRSYPDTAVPQCIPCGP</sequence>